<protein>
    <recommendedName>
        <fullName evidence="1">Membrane-bound lytic murein transglycosylase F</fullName>
        <ecNumber evidence="1">4.2.2.n1</ecNumber>
    </recommendedName>
    <alternativeName>
        <fullName evidence="1">Murein lyase F</fullName>
    </alternativeName>
</protein>
<accession>Q886W7</accession>
<feature type="signal peptide" evidence="1">
    <location>
        <begin position="1"/>
        <end position="29"/>
    </location>
</feature>
<feature type="chain" id="PRO_0000353966" description="Membrane-bound lytic murein transglycosylase F">
    <location>
        <begin position="30"/>
        <end position="497"/>
    </location>
</feature>
<feature type="region of interest" description="Non-LT domain" evidence="1">
    <location>
        <begin position="30"/>
        <end position="267"/>
    </location>
</feature>
<feature type="region of interest" description="LT domain" evidence="1">
    <location>
        <begin position="268"/>
        <end position="497"/>
    </location>
</feature>
<feature type="region of interest" description="Disordered" evidence="2">
    <location>
        <begin position="464"/>
        <end position="497"/>
    </location>
</feature>
<feature type="compositionally biased region" description="Low complexity" evidence="2">
    <location>
        <begin position="486"/>
        <end position="497"/>
    </location>
</feature>
<feature type="active site" evidence="1">
    <location>
        <position position="314"/>
    </location>
</feature>
<sequence>MFFRPDFRPRCAKWLIATGLFLMLGACVEKPTTLERVKEDGVLRVITRNSPATYFQDRNGETGFEYELVKRFADDLGVELKIETADNLDDLFDQMNKPGGPVLGAAGLIETSKRKQQARFSHSYLEVTPQVVYRNGQSRPTDPGDLVGKRIVVLKGSAHAEQLAALKAQTPAIEYEESDAVEVVDLLRMVDEGQIDLTLVDSNELAMNQVYFPNVRVAFDLGEAREQRWAVAPGEDNSLLNEINAYLDKVEKNGTLQRLKDRYYGHVDVLGYVGAYTFAQHLQERLPKYEKHFQTSAKKEQVDWRLLAAIGYQESMWQPAVTSKTGVRGLMMLTQNTAQAMGVTNRLDARQSIQGGAKYFAYVKDQLDDKIQEPDRTWLALASYNIGGGHLEDARKLAENEGLNPNKWLDVKKMLPRLAQKKWYSKTRYGYARGGEPVHFVANIRRYYDILTWVTQPQLEGSQVADGNLHVPGVDKTQPPAPTAPVVPASSPEKPAL</sequence>
<keyword id="KW-0998">Cell outer membrane</keyword>
<keyword id="KW-0961">Cell wall biogenesis/degradation</keyword>
<keyword id="KW-0456">Lyase</keyword>
<keyword id="KW-0472">Membrane</keyword>
<keyword id="KW-1185">Reference proteome</keyword>
<keyword id="KW-0732">Signal</keyword>
<reference key="1">
    <citation type="journal article" date="2003" name="Proc. Natl. Acad. Sci. U.S.A.">
        <title>The complete genome sequence of the Arabidopsis and tomato pathogen Pseudomonas syringae pv. tomato DC3000.</title>
        <authorList>
            <person name="Buell C.R."/>
            <person name="Joardar V."/>
            <person name="Lindeberg M."/>
            <person name="Selengut J."/>
            <person name="Paulsen I.T."/>
            <person name="Gwinn M.L."/>
            <person name="Dodson R.J."/>
            <person name="DeBoy R.T."/>
            <person name="Durkin A.S."/>
            <person name="Kolonay J.F."/>
            <person name="Madupu R."/>
            <person name="Daugherty S.C."/>
            <person name="Brinkac L.M."/>
            <person name="Beanan M.J."/>
            <person name="Haft D.H."/>
            <person name="Nelson W.C."/>
            <person name="Davidsen T.M."/>
            <person name="Zafar N."/>
            <person name="Zhou L."/>
            <person name="Liu J."/>
            <person name="Yuan Q."/>
            <person name="Khouri H.M."/>
            <person name="Fedorova N.B."/>
            <person name="Tran B."/>
            <person name="Russell D."/>
            <person name="Berry K.J."/>
            <person name="Utterback T.R."/>
            <person name="Van Aken S.E."/>
            <person name="Feldblyum T.V."/>
            <person name="D'Ascenzo M."/>
            <person name="Deng W.-L."/>
            <person name="Ramos A.R."/>
            <person name="Alfano J.R."/>
            <person name="Cartinhour S."/>
            <person name="Chatterjee A.K."/>
            <person name="Delaney T.P."/>
            <person name="Lazarowitz S.G."/>
            <person name="Martin G.B."/>
            <person name="Schneider D.J."/>
            <person name="Tang X."/>
            <person name="Bender C.L."/>
            <person name="White O."/>
            <person name="Fraser C.M."/>
            <person name="Collmer A."/>
        </authorList>
    </citation>
    <scope>NUCLEOTIDE SEQUENCE [LARGE SCALE GENOMIC DNA]</scope>
    <source>
        <strain>ATCC BAA-871 / DC3000</strain>
    </source>
</reference>
<organism>
    <name type="scientific">Pseudomonas syringae pv. tomato (strain ATCC BAA-871 / DC3000)</name>
    <dbReference type="NCBI Taxonomy" id="223283"/>
    <lineage>
        <taxon>Bacteria</taxon>
        <taxon>Pseudomonadati</taxon>
        <taxon>Pseudomonadota</taxon>
        <taxon>Gammaproteobacteria</taxon>
        <taxon>Pseudomonadales</taxon>
        <taxon>Pseudomonadaceae</taxon>
        <taxon>Pseudomonas</taxon>
    </lineage>
</organism>
<dbReference type="EC" id="4.2.2.n1" evidence="1"/>
<dbReference type="EMBL" id="AE016853">
    <property type="protein sequence ID" value="AAO54979.1"/>
    <property type="status" value="ALT_INIT"/>
    <property type="molecule type" value="Genomic_DNA"/>
</dbReference>
<dbReference type="RefSeq" id="NP_791284.1">
    <property type="nucleotide sequence ID" value="NC_004578.1"/>
</dbReference>
<dbReference type="SMR" id="Q886W7"/>
<dbReference type="STRING" id="223283.PSPTO_1458"/>
<dbReference type="CAZy" id="GH23">
    <property type="family name" value="Glycoside Hydrolase Family 23"/>
</dbReference>
<dbReference type="DNASU" id="1183095"/>
<dbReference type="KEGG" id="pst:PSPTO_1458"/>
<dbReference type="PATRIC" id="fig|223283.9.peg.1480"/>
<dbReference type="eggNOG" id="COG4623">
    <property type="taxonomic scope" value="Bacteria"/>
</dbReference>
<dbReference type="HOGENOM" id="CLU_027494_0_1_6"/>
<dbReference type="OrthoDB" id="9815002at2"/>
<dbReference type="Proteomes" id="UP000002515">
    <property type="component" value="Chromosome"/>
</dbReference>
<dbReference type="GO" id="GO:0009279">
    <property type="term" value="C:cell outer membrane"/>
    <property type="evidence" value="ECO:0007669"/>
    <property type="project" value="UniProtKB-SubCell"/>
</dbReference>
<dbReference type="GO" id="GO:0008933">
    <property type="term" value="F:peptidoglycan lytic transglycosylase activity"/>
    <property type="evidence" value="ECO:0007669"/>
    <property type="project" value="UniProtKB-UniRule"/>
</dbReference>
<dbReference type="GO" id="GO:0016998">
    <property type="term" value="P:cell wall macromolecule catabolic process"/>
    <property type="evidence" value="ECO:0007669"/>
    <property type="project" value="UniProtKB-UniRule"/>
</dbReference>
<dbReference type="GO" id="GO:0071555">
    <property type="term" value="P:cell wall organization"/>
    <property type="evidence" value="ECO:0007669"/>
    <property type="project" value="UniProtKB-KW"/>
</dbReference>
<dbReference type="GO" id="GO:0009253">
    <property type="term" value="P:peptidoglycan catabolic process"/>
    <property type="evidence" value="ECO:0007669"/>
    <property type="project" value="TreeGrafter"/>
</dbReference>
<dbReference type="CDD" id="cd13403">
    <property type="entry name" value="MLTF-like"/>
    <property type="match status" value="1"/>
</dbReference>
<dbReference type="CDD" id="cd01009">
    <property type="entry name" value="PBP2_YfhD_N"/>
    <property type="match status" value="1"/>
</dbReference>
<dbReference type="Gene3D" id="1.10.530.10">
    <property type="match status" value="1"/>
</dbReference>
<dbReference type="Gene3D" id="3.40.190.10">
    <property type="entry name" value="Periplasmic binding protein-like II"/>
    <property type="match status" value="2"/>
</dbReference>
<dbReference type="HAMAP" id="MF_02016">
    <property type="entry name" value="MltF"/>
    <property type="match status" value="1"/>
</dbReference>
<dbReference type="InterPro" id="IPR023346">
    <property type="entry name" value="Lysozyme-like_dom_sf"/>
</dbReference>
<dbReference type="InterPro" id="IPR023703">
    <property type="entry name" value="MltF"/>
</dbReference>
<dbReference type="InterPro" id="IPR001638">
    <property type="entry name" value="Solute-binding_3/MltF_N"/>
</dbReference>
<dbReference type="InterPro" id="IPR000189">
    <property type="entry name" value="Transglyc_AS"/>
</dbReference>
<dbReference type="InterPro" id="IPR008258">
    <property type="entry name" value="Transglycosylase_SLT_dom_1"/>
</dbReference>
<dbReference type="NCBIfam" id="NF008112">
    <property type="entry name" value="PRK10859.1"/>
    <property type="match status" value="1"/>
</dbReference>
<dbReference type="PANTHER" id="PTHR35936">
    <property type="entry name" value="MEMBRANE-BOUND LYTIC MUREIN TRANSGLYCOSYLASE F"/>
    <property type="match status" value="1"/>
</dbReference>
<dbReference type="PANTHER" id="PTHR35936:SF32">
    <property type="entry name" value="MEMBRANE-BOUND LYTIC MUREIN TRANSGLYCOSYLASE F"/>
    <property type="match status" value="1"/>
</dbReference>
<dbReference type="Pfam" id="PF00497">
    <property type="entry name" value="SBP_bac_3"/>
    <property type="match status" value="1"/>
</dbReference>
<dbReference type="Pfam" id="PF01464">
    <property type="entry name" value="SLT"/>
    <property type="match status" value="1"/>
</dbReference>
<dbReference type="SMART" id="SM00062">
    <property type="entry name" value="PBPb"/>
    <property type="match status" value="1"/>
</dbReference>
<dbReference type="SUPFAM" id="SSF53955">
    <property type="entry name" value="Lysozyme-like"/>
    <property type="match status" value="1"/>
</dbReference>
<dbReference type="SUPFAM" id="SSF53850">
    <property type="entry name" value="Periplasmic binding protein-like II"/>
    <property type="match status" value="1"/>
</dbReference>
<dbReference type="PROSITE" id="PS51257">
    <property type="entry name" value="PROKAR_LIPOPROTEIN"/>
    <property type="match status" value="1"/>
</dbReference>
<dbReference type="PROSITE" id="PS00922">
    <property type="entry name" value="TRANSGLYCOSYLASE"/>
    <property type="match status" value="1"/>
</dbReference>
<name>MLTF_PSESM</name>
<proteinExistence type="inferred from homology"/>
<evidence type="ECO:0000255" key="1">
    <source>
        <dbReference type="HAMAP-Rule" id="MF_02016"/>
    </source>
</evidence>
<evidence type="ECO:0000256" key="2">
    <source>
        <dbReference type="SAM" id="MobiDB-lite"/>
    </source>
</evidence>
<evidence type="ECO:0000305" key="3"/>
<comment type="function">
    <text evidence="1">Murein-degrading enzyme that degrades murein glycan strands and insoluble, high-molecular weight murein sacculi, with the concomitant formation of a 1,6-anhydromuramoyl product. Lytic transglycosylases (LTs) play an integral role in the metabolism of the peptidoglycan (PG) sacculus. Their lytic action creates space within the PG sacculus to allow for its expansion as well as for the insertion of various structures such as secretion systems and flagella.</text>
</comment>
<comment type="catalytic activity">
    <reaction evidence="1">
        <text>Exolytic cleavage of the (1-&gt;4)-beta-glycosidic linkage between N-acetylmuramic acid (MurNAc) and N-acetylglucosamine (GlcNAc) residues in peptidoglycan, from either the reducing or the non-reducing ends of the peptidoglycan chains, with concomitant formation of a 1,6-anhydrobond in the MurNAc residue.</text>
        <dbReference type="EC" id="4.2.2.n1"/>
    </reaction>
</comment>
<comment type="subcellular location">
    <subcellularLocation>
        <location>Cell outer membrane</location>
        <topology>Peripheral membrane protein</topology>
    </subcellularLocation>
    <text evidence="1">Attached to the inner leaflet of the outer membrane.</text>
</comment>
<comment type="domain">
    <text evidence="1">The N-terminal domain does not have lytic activity and probably modulates enzymatic activity. The C-terminal domain is the catalytic active domain.</text>
</comment>
<comment type="similarity">
    <text evidence="1">In the N-terminal section; belongs to the bacterial solute-binding protein 3 family.</text>
</comment>
<comment type="similarity">
    <text evidence="1">In the C-terminal section; belongs to the transglycosylase Slt family.</text>
</comment>
<comment type="sequence caution" evidence="3">
    <conflict type="erroneous initiation">
        <sequence resource="EMBL-CDS" id="AAO54979"/>
    </conflict>
</comment>
<gene>
    <name evidence="1" type="primary">mltF</name>
    <name type="ordered locus">PSPTO_1458</name>
</gene>